<sequence length="251" mass="28088">MTMLNGLRILDTLPLAALEVGKHWYWEIGNLKLHGQVFMASWVVIALLIIASLLATRNIQRVPSGMQNFMEYVLEFLRDLARTQLGEKHYRPWLPFIGTLFLFIFVSNWSGSLIPWRLIEIPEGELAAPTNDINTTVALALLTSLAYFYAGLSKKGLGYFANYVQPIPVLLPIKILEDFTKPLSLSFRLFGNILADELVVAVLVFLVPLFVPLPLMALGLFTSAIQALVFATLAGAYIHEAIESEEEEEHA</sequence>
<name>ATP62_CROS5</name>
<keyword id="KW-0066">ATP synthesis</keyword>
<keyword id="KW-0138">CF(0)</keyword>
<keyword id="KW-0375">Hydrogen ion transport</keyword>
<keyword id="KW-0406">Ion transport</keyword>
<keyword id="KW-0472">Membrane</keyword>
<keyword id="KW-1185">Reference proteome</keyword>
<keyword id="KW-0793">Thylakoid</keyword>
<keyword id="KW-0812">Transmembrane</keyword>
<keyword id="KW-1133">Transmembrane helix</keyword>
<keyword id="KW-0813">Transport</keyword>
<accession>B1WUH7</accession>
<comment type="function">
    <text evidence="1">Key component of the proton channel; it plays a direct role in the translocation of protons across the membrane.</text>
</comment>
<comment type="subunit">
    <text evidence="1">F-type ATPases have 2 components, CF(1) - the catalytic core - and CF(0) - the membrane proton channel. CF(1) has five subunits: alpha(3), beta(3), gamma(1), delta(1), epsilon(1). CF(0) has four main subunits: a, b, b' and c.</text>
</comment>
<comment type="subcellular location">
    <subcellularLocation>
        <location evidence="1">Cellular thylakoid membrane</location>
        <topology evidence="1">Multi-pass membrane protein</topology>
    </subcellularLocation>
</comment>
<comment type="similarity">
    <text evidence="1">Belongs to the ATPase A chain family.</text>
</comment>
<evidence type="ECO:0000255" key="1">
    <source>
        <dbReference type="HAMAP-Rule" id="MF_01393"/>
    </source>
</evidence>
<gene>
    <name evidence="1" type="primary">atpB2</name>
    <name evidence="1" type="synonym">atpI2</name>
    <name type="ordered locus">cce_4483</name>
</gene>
<feature type="chain" id="PRO_0000362281" description="ATP synthase subunit a 2">
    <location>
        <begin position="1"/>
        <end position="251"/>
    </location>
</feature>
<feature type="transmembrane region" description="Helical" evidence="1">
    <location>
        <begin position="35"/>
        <end position="55"/>
    </location>
</feature>
<feature type="transmembrane region" description="Helical" evidence="1">
    <location>
        <begin position="94"/>
        <end position="114"/>
    </location>
</feature>
<feature type="transmembrane region" description="Helical" evidence="1">
    <location>
        <begin position="133"/>
        <end position="153"/>
    </location>
</feature>
<feature type="transmembrane region" description="Helical" evidence="1">
    <location>
        <begin position="198"/>
        <end position="218"/>
    </location>
</feature>
<feature type="transmembrane region" description="Helical" evidence="1">
    <location>
        <begin position="219"/>
        <end position="239"/>
    </location>
</feature>
<reference key="1">
    <citation type="journal article" date="2008" name="Proc. Natl. Acad. Sci. U.S.A.">
        <title>The genome of Cyanothece 51142, a unicellular diazotrophic cyanobacterium important in the marine nitrogen cycle.</title>
        <authorList>
            <person name="Welsh E.A."/>
            <person name="Liberton M."/>
            <person name="Stoeckel J."/>
            <person name="Loh T."/>
            <person name="Elvitigala T."/>
            <person name="Wang C."/>
            <person name="Wollam A."/>
            <person name="Fulton R.S."/>
            <person name="Clifton S.W."/>
            <person name="Jacobs J.M."/>
            <person name="Aurora R."/>
            <person name="Ghosh B.K."/>
            <person name="Sherman L.A."/>
            <person name="Smith R.D."/>
            <person name="Wilson R.K."/>
            <person name="Pakrasi H.B."/>
        </authorList>
    </citation>
    <scope>NUCLEOTIDE SEQUENCE [LARGE SCALE GENOMIC DNA]</scope>
    <source>
        <strain>ATCC 51142 / BH68</strain>
    </source>
</reference>
<protein>
    <recommendedName>
        <fullName evidence="1">ATP synthase subunit a 2</fullName>
    </recommendedName>
    <alternativeName>
        <fullName evidence="1">ATP synthase F0 sector subunit a 2</fullName>
    </alternativeName>
    <alternativeName>
        <fullName evidence="1">F-ATPase subunit 6 2</fullName>
    </alternativeName>
</protein>
<proteinExistence type="inferred from homology"/>
<dbReference type="EMBL" id="CP000806">
    <property type="protein sequence ID" value="ACB53831.1"/>
    <property type="molecule type" value="Genomic_DNA"/>
</dbReference>
<dbReference type="RefSeq" id="WP_009543462.1">
    <property type="nucleotide sequence ID" value="NC_010546.1"/>
</dbReference>
<dbReference type="SMR" id="B1WUH7"/>
<dbReference type="STRING" id="43989.cce_4483"/>
<dbReference type="KEGG" id="cyt:cce_4483"/>
<dbReference type="eggNOG" id="COG0356">
    <property type="taxonomic scope" value="Bacteria"/>
</dbReference>
<dbReference type="HOGENOM" id="CLU_041018_2_4_3"/>
<dbReference type="OrthoDB" id="9789241at2"/>
<dbReference type="Proteomes" id="UP000001203">
    <property type="component" value="Chromosome circular"/>
</dbReference>
<dbReference type="GO" id="GO:0031676">
    <property type="term" value="C:plasma membrane-derived thylakoid membrane"/>
    <property type="evidence" value="ECO:0007669"/>
    <property type="project" value="UniProtKB-SubCell"/>
</dbReference>
<dbReference type="GO" id="GO:0045259">
    <property type="term" value="C:proton-transporting ATP synthase complex"/>
    <property type="evidence" value="ECO:0007669"/>
    <property type="project" value="UniProtKB-KW"/>
</dbReference>
<dbReference type="GO" id="GO:0046933">
    <property type="term" value="F:proton-transporting ATP synthase activity, rotational mechanism"/>
    <property type="evidence" value="ECO:0007669"/>
    <property type="project" value="UniProtKB-UniRule"/>
</dbReference>
<dbReference type="CDD" id="cd00310">
    <property type="entry name" value="ATP-synt_Fo_a_6"/>
    <property type="match status" value="1"/>
</dbReference>
<dbReference type="FunFam" id="1.20.120.220:FF:000001">
    <property type="entry name" value="ATP synthase subunit a, chloroplastic"/>
    <property type="match status" value="1"/>
</dbReference>
<dbReference type="Gene3D" id="1.20.120.220">
    <property type="entry name" value="ATP synthase, F0 complex, subunit A"/>
    <property type="match status" value="1"/>
</dbReference>
<dbReference type="HAMAP" id="MF_01393">
    <property type="entry name" value="ATP_synth_a_bact"/>
    <property type="match status" value="1"/>
</dbReference>
<dbReference type="InterPro" id="IPR045082">
    <property type="entry name" value="ATP_syn_F0_a_bact/chloroplast"/>
</dbReference>
<dbReference type="InterPro" id="IPR000568">
    <property type="entry name" value="ATP_synth_F0_asu"/>
</dbReference>
<dbReference type="InterPro" id="IPR023011">
    <property type="entry name" value="ATP_synth_F0_asu_AS"/>
</dbReference>
<dbReference type="InterPro" id="IPR035908">
    <property type="entry name" value="F0_ATP_A_sf"/>
</dbReference>
<dbReference type="NCBIfam" id="TIGR01131">
    <property type="entry name" value="ATP_synt_6_or_A"/>
    <property type="match status" value="1"/>
</dbReference>
<dbReference type="PANTHER" id="PTHR42823">
    <property type="entry name" value="ATP SYNTHASE SUBUNIT A, CHLOROPLASTIC"/>
    <property type="match status" value="1"/>
</dbReference>
<dbReference type="PANTHER" id="PTHR42823:SF3">
    <property type="entry name" value="ATP SYNTHASE SUBUNIT A, CHLOROPLASTIC"/>
    <property type="match status" value="1"/>
</dbReference>
<dbReference type="Pfam" id="PF00119">
    <property type="entry name" value="ATP-synt_A"/>
    <property type="match status" value="1"/>
</dbReference>
<dbReference type="PRINTS" id="PR00123">
    <property type="entry name" value="ATPASEA"/>
</dbReference>
<dbReference type="SUPFAM" id="SSF81336">
    <property type="entry name" value="F1F0 ATP synthase subunit A"/>
    <property type="match status" value="1"/>
</dbReference>
<dbReference type="PROSITE" id="PS00449">
    <property type="entry name" value="ATPASE_A"/>
    <property type="match status" value="1"/>
</dbReference>
<organism>
    <name type="scientific">Crocosphaera subtropica (strain ATCC 51142 / BH68)</name>
    <name type="common">Cyanothece sp. (strain ATCC 51142)</name>
    <dbReference type="NCBI Taxonomy" id="43989"/>
    <lineage>
        <taxon>Bacteria</taxon>
        <taxon>Bacillati</taxon>
        <taxon>Cyanobacteriota</taxon>
        <taxon>Cyanophyceae</taxon>
        <taxon>Oscillatoriophycideae</taxon>
        <taxon>Chroococcales</taxon>
        <taxon>Aphanothecaceae</taxon>
        <taxon>Crocosphaera</taxon>
        <taxon>Crocosphaera subtropica</taxon>
    </lineage>
</organism>